<keyword id="KW-0150">Chloroplast</keyword>
<keyword id="KW-0249">Electron transport</keyword>
<keyword id="KW-0349">Heme</keyword>
<keyword id="KW-0408">Iron</keyword>
<keyword id="KW-0472">Membrane</keyword>
<keyword id="KW-0479">Metal-binding</keyword>
<keyword id="KW-0602">Photosynthesis</keyword>
<keyword id="KW-0934">Plastid</keyword>
<keyword id="KW-0732">Signal</keyword>
<keyword id="KW-0793">Thylakoid</keyword>
<keyword id="KW-0812">Transmembrane</keyword>
<keyword id="KW-1133">Transmembrane helix</keyword>
<keyword id="KW-0813">Transport</keyword>
<feature type="signal peptide" evidence="2">
    <location>
        <begin position="1"/>
        <end position="31"/>
    </location>
</feature>
<feature type="chain" id="PRO_0000023810" description="Cytochrome f">
    <location>
        <begin position="32"/>
        <end position="317"/>
    </location>
</feature>
<feature type="transmembrane region" description="Helical" evidence="2">
    <location>
        <begin position="280"/>
        <end position="302"/>
    </location>
</feature>
<feature type="binding site" description="axial binding residue" evidence="2">
    <location>
        <position position="32"/>
    </location>
    <ligand>
        <name>heme</name>
        <dbReference type="ChEBI" id="CHEBI:30413"/>
    </ligand>
    <ligandPart>
        <name>Fe</name>
        <dbReference type="ChEBI" id="CHEBI:18248"/>
    </ligandPart>
</feature>
<feature type="binding site" description="covalent" evidence="2">
    <location>
        <position position="52"/>
    </location>
    <ligand>
        <name>heme</name>
        <dbReference type="ChEBI" id="CHEBI:30413"/>
    </ligand>
</feature>
<feature type="binding site" description="covalent" evidence="2">
    <location>
        <position position="55"/>
    </location>
    <ligand>
        <name>heme</name>
        <dbReference type="ChEBI" id="CHEBI:30413"/>
    </ligand>
</feature>
<feature type="binding site" description="axial binding residue" evidence="2">
    <location>
        <position position="56"/>
    </location>
    <ligand>
        <name>heme</name>
        <dbReference type="ChEBI" id="CHEBI:30413"/>
    </ligand>
    <ligandPart>
        <name>Fe</name>
        <dbReference type="ChEBI" id="CHEBI:18248"/>
    </ligandPart>
</feature>
<accession>Q95AG0</accession>
<comment type="function">
    <text evidence="2">Component of the cytochrome b6-f complex, which mediates electron transfer between photosystem II (PSII) and photosystem I (PSI), cyclic electron flow around PSI, and state transitions.</text>
</comment>
<comment type="cofactor">
    <cofactor evidence="2">
        <name>heme</name>
        <dbReference type="ChEBI" id="CHEBI:30413"/>
    </cofactor>
    <text evidence="2">Binds 1 heme group covalently.</text>
</comment>
<comment type="subunit">
    <text evidence="1">The 4 large subunits of the cytochrome b6-f complex are cytochrome b6, subunit IV (17 kDa polypeptide, petD), cytochrome f and the Rieske protein, while the 4 small subunits are PetG, PetL, PetM and PetN. The complex functions as a dimer (By similarity).</text>
</comment>
<comment type="subcellular location">
    <subcellularLocation>
        <location evidence="2">Plastid</location>
        <location evidence="2">Chloroplast thylakoid membrane</location>
        <topology evidence="2">Single-pass membrane protein</topology>
    </subcellularLocation>
</comment>
<comment type="similarity">
    <text evidence="2">Belongs to the cytochrome f family.</text>
</comment>
<dbReference type="EMBL" id="AY039799">
    <property type="protein sequence ID" value="AAK64209.1"/>
    <property type="molecule type" value="Genomic_DNA"/>
</dbReference>
<dbReference type="SMR" id="Q95AG0"/>
<dbReference type="GO" id="GO:0009535">
    <property type="term" value="C:chloroplast thylakoid membrane"/>
    <property type="evidence" value="ECO:0007669"/>
    <property type="project" value="UniProtKB-SubCell"/>
</dbReference>
<dbReference type="GO" id="GO:0009055">
    <property type="term" value="F:electron transfer activity"/>
    <property type="evidence" value="ECO:0007669"/>
    <property type="project" value="UniProtKB-UniRule"/>
</dbReference>
<dbReference type="GO" id="GO:0020037">
    <property type="term" value="F:heme binding"/>
    <property type="evidence" value="ECO:0007669"/>
    <property type="project" value="InterPro"/>
</dbReference>
<dbReference type="GO" id="GO:0005506">
    <property type="term" value="F:iron ion binding"/>
    <property type="evidence" value="ECO:0007669"/>
    <property type="project" value="InterPro"/>
</dbReference>
<dbReference type="GO" id="GO:0015979">
    <property type="term" value="P:photosynthesis"/>
    <property type="evidence" value="ECO:0007669"/>
    <property type="project" value="UniProtKB-UniRule"/>
</dbReference>
<dbReference type="FunFam" id="1.20.5.700:FF:000001">
    <property type="entry name" value="Cytochrome f"/>
    <property type="match status" value="1"/>
</dbReference>
<dbReference type="FunFam" id="2.60.40.830:FF:000001">
    <property type="entry name" value="Cytochrome f"/>
    <property type="match status" value="1"/>
</dbReference>
<dbReference type="Gene3D" id="2.40.50.100">
    <property type="match status" value="1"/>
</dbReference>
<dbReference type="Gene3D" id="2.60.40.830">
    <property type="entry name" value="Cytochrome f large domain"/>
    <property type="match status" value="1"/>
</dbReference>
<dbReference type="Gene3D" id="1.20.5.700">
    <property type="entry name" value="Single helix bin"/>
    <property type="match status" value="1"/>
</dbReference>
<dbReference type="HAMAP" id="MF_00610">
    <property type="entry name" value="Cytb6_f_cytF"/>
    <property type="match status" value="1"/>
</dbReference>
<dbReference type="InterPro" id="IPR024058">
    <property type="entry name" value="Cyt-f_TM"/>
</dbReference>
<dbReference type="InterPro" id="IPR002325">
    <property type="entry name" value="Cyt_f"/>
</dbReference>
<dbReference type="InterPro" id="IPR024094">
    <property type="entry name" value="Cyt_f_lg_dom"/>
</dbReference>
<dbReference type="InterPro" id="IPR036826">
    <property type="entry name" value="Cyt_f_lg_dom_sf"/>
</dbReference>
<dbReference type="InterPro" id="IPR011054">
    <property type="entry name" value="Rudment_hybrid_motif"/>
</dbReference>
<dbReference type="PANTHER" id="PTHR33288">
    <property type="match status" value="1"/>
</dbReference>
<dbReference type="PANTHER" id="PTHR33288:SF10">
    <property type="entry name" value="CYTOCHROME F"/>
    <property type="match status" value="1"/>
</dbReference>
<dbReference type="Pfam" id="PF01333">
    <property type="entry name" value="Apocytochr_F_C"/>
    <property type="match status" value="1"/>
</dbReference>
<dbReference type="Pfam" id="PF16639">
    <property type="entry name" value="Apocytochr_F_N"/>
    <property type="match status" value="1"/>
</dbReference>
<dbReference type="PRINTS" id="PR00610">
    <property type="entry name" value="CYTOCHROMEF"/>
</dbReference>
<dbReference type="SUPFAM" id="SSF103431">
    <property type="entry name" value="Cytochrome f subunit of the cytochrome b6f complex, transmembrane anchor"/>
    <property type="match status" value="1"/>
</dbReference>
<dbReference type="SUPFAM" id="SSF49441">
    <property type="entry name" value="Cytochrome f, large domain"/>
    <property type="match status" value="1"/>
</dbReference>
<dbReference type="SUPFAM" id="SSF51246">
    <property type="entry name" value="Rudiment single hybrid motif"/>
    <property type="match status" value="1"/>
</dbReference>
<dbReference type="PROSITE" id="PS51010">
    <property type="entry name" value="CYTF"/>
    <property type="match status" value="1"/>
</dbReference>
<gene>
    <name evidence="2" type="primary">petA</name>
</gene>
<protein>
    <recommendedName>
        <fullName evidence="2">Cytochrome f</fullName>
    </recommendedName>
</protein>
<evidence type="ECO:0000250" key="1"/>
<evidence type="ECO:0000255" key="2">
    <source>
        <dbReference type="HAMAP-Rule" id="MF_00610"/>
    </source>
</evidence>
<name>CYF_CHLSU</name>
<geneLocation type="chloroplast"/>
<organism>
    <name type="scientific">Chlamydomonas subcaudata</name>
    <dbReference type="NCBI Taxonomy" id="163303"/>
    <lineage>
        <taxon>Eukaryota</taxon>
        <taxon>Viridiplantae</taxon>
        <taxon>Chlorophyta</taxon>
        <taxon>core chlorophytes</taxon>
        <taxon>Chlorophyceae</taxon>
        <taxon>CS clade</taxon>
        <taxon>Chlamydomonadales</taxon>
        <taxon>Chlamydomonadaceae</taxon>
        <taxon>Chlamydomonas</taxon>
    </lineage>
</organism>
<proteinExistence type="inferred from homology"/>
<sequence>MIFKPQSFLKAIVLSMTITFAFNMSAPIASAYPIFAQQNYENPREANGRIVCANCHLAQKPVELEVPQAVLPDTVFEAIIQIPYDTQVKQVLANGKKGDLNVGMVLILPEGFELAPADRIPEEMKKKVGNLYYQPYSPDKKNILVVGPVPGKQYSEMVVPLLSPDPATNKNVSYLKYPIYVGGNRGRGQVYPDGSKSNNTVYNSPVSGTITEILKLEGKKGGYTISITKADGVVLTEKIPGGPEVIVKEGQAIIADQPLTNNPNVGGFGQKDVEVVLQNPVRIQGLLAFFACILLAQILLVVKKKQFEKVQLAEMNF</sequence>
<reference key="1">
    <citation type="submission" date="2001-06" db="EMBL/GenBank/DDBJ databases">
        <title>Structural analysis of cytochrome f from the psychrophilic alga Chlamydomonas subcaudata.</title>
        <authorList>
            <person name="Gudynaite-Savitch L."/>
            <person name="Kohalmi S.E."/>
            <person name="Huner N.P.A."/>
        </authorList>
    </citation>
    <scope>NUCLEOTIDE SEQUENCE [GENOMIC DNA]</scope>
</reference>